<feature type="chain" id="PRO_1000082634" description="Nucleotide-binding protein Shal_3198">
    <location>
        <begin position="1"/>
        <end position="161"/>
    </location>
</feature>
<organism>
    <name type="scientific">Shewanella halifaxensis (strain HAW-EB4)</name>
    <dbReference type="NCBI Taxonomy" id="458817"/>
    <lineage>
        <taxon>Bacteria</taxon>
        <taxon>Pseudomonadati</taxon>
        <taxon>Pseudomonadota</taxon>
        <taxon>Gammaproteobacteria</taxon>
        <taxon>Alteromonadales</taxon>
        <taxon>Shewanellaceae</taxon>
        <taxon>Shewanella</taxon>
    </lineage>
</organism>
<gene>
    <name type="ordered locus">Shal_3198</name>
</gene>
<proteinExistence type="inferred from homology"/>
<protein>
    <recommendedName>
        <fullName evidence="1">Nucleotide-binding protein Shal_3198</fullName>
    </recommendedName>
</protein>
<evidence type="ECO:0000255" key="1">
    <source>
        <dbReference type="HAMAP-Rule" id="MF_00632"/>
    </source>
</evidence>
<comment type="function">
    <text evidence="1">Nucleotide-binding protein.</text>
</comment>
<comment type="similarity">
    <text evidence="1">Belongs to the YajQ family.</text>
</comment>
<accession>B0TR14</accession>
<sequence length="161" mass="18437">MPSMDIVSEVNEVELRNAVDNSVRELKGRFDFRGKEASIEYKDHIVTLTAEDDFQCRQLVDILRMQMSKRDVDPKSMDVDEKAVHSGKTFSLKVKFKEGIETLVAKKLVKLIKDSKLKVQSSIQGDSVRVTGKKRDDLQQVMALARESELGQPFQFNNFRD</sequence>
<name>Y3198_SHEHH</name>
<dbReference type="EMBL" id="CP000931">
    <property type="protein sequence ID" value="ABZ77745.1"/>
    <property type="molecule type" value="Genomic_DNA"/>
</dbReference>
<dbReference type="RefSeq" id="WP_012278268.1">
    <property type="nucleotide sequence ID" value="NC_010334.1"/>
</dbReference>
<dbReference type="SMR" id="B0TR14"/>
<dbReference type="STRING" id="458817.Shal_3198"/>
<dbReference type="KEGG" id="shl:Shal_3198"/>
<dbReference type="eggNOG" id="COG1666">
    <property type="taxonomic scope" value="Bacteria"/>
</dbReference>
<dbReference type="HOGENOM" id="CLU_099839_1_0_6"/>
<dbReference type="OrthoDB" id="9801447at2"/>
<dbReference type="Proteomes" id="UP000001317">
    <property type="component" value="Chromosome"/>
</dbReference>
<dbReference type="GO" id="GO:0005829">
    <property type="term" value="C:cytosol"/>
    <property type="evidence" value="ECO:0007669"/>
    <property type="project" value="TreeGrafter"/>
</dbReference>
<dbReference type="GO" id="GO:0000166">
    <property type="term" value="F:nucleotide binding"/>
    <property type="evidence" value="ECO:0007669"/>
    <property type="project" value="TreeGrafter"/>
</dbReference>
<dbReference type="CDD" id="cd11740">
    <property type="entry name" value="YajQ_like"/>
    <property type="match status" value="1"/>
</dbReference>
<dbReference type="FunFam" id="3.30.70.860:FF:000001">
    <property type="entry name" value="UPF0234 protein YajQ"/>
    <property type="match status" value="1"/>
</dbReference>
<dbReference type="Gene3D" id="3.30.70.860">
    <property type="match status" value="1"/>
</dbReference>
<dbReference type="Gene3D" id="3.30.70.990">
    <property type="entry name" value="YajQ-like, domain 2"/>
    <property type="match status" value="1"/>
</dbReference>
<dbReference type="HAMAP" id="MF_00632">
    <property type="entry name" value="YajQ"/>
    <property type="match status" value="1"/>
</dbReference>
<dbReference type="InterPro" id="IPR007551">
    <property type="entry name" value="DUF520"/>
</dbReference>
<dbReference type="InterPro" id="IPR035571">
    <property type="entry name" value="UPF0234-like_C"/>
</dbReference>
<dbReference type="InterPro" id="IPR035570">
    <property type="entry name" value="UPF0234_N"/>
</dbReference>
<dbReference type="InterPro" id="IPR036183">
    <property type="entry name" value="YajQ-like_sf"/>
</dbReference>
<dbReference type="NCBIfam" id="NF003819">
    <property type="entry name" value="PRK05412.1"/>
    <property type="match status" value="1"/>
</dbReference>
<dbReference type="PANTHER" id="PTHR30476">
    <property type="entry name" value="UPF0234 PROTEIN YAJQ"/>
    <property type="match status" value="1"/>
</dbReference>
<dbReference type="PANTHER" id="PTHR30476:SF0">
    <property type="entry name" value="UPF0234 PROTEIN YAJQ"/>
    <property type="match status" value="1"/>
</dbReference>
<dbReference type="Pfam" id="PF04461">
    <property type="entry name" value="DUF520"/>
    <property type="match status" value="1"/>
</dbReference>
<dbReference type="SUPFAM" id="SSF89963">
    <property type="entry name" value="YajQ-like"/>
    <property type="match status" value="2"/>
</dbReference>
<keyword id="KW-0547">Nucleotide-binding</keyword>
<reference key="1">
    <citation type="submission" date="2008-01" db="EMBL/GenBank/DDBJ databases">
        <title>Complete sequence of Shewanella halifaxensis HAW-EB4.</title>
        <authorList>
            <consortium name="US DOE Joint Genome Institute"/>
            <person name="Copeland A."/>
            <person name="Lucas S."/>
            <person name="Lapidus A."/>
            <person name="Glavina del Rio T."/>
            <person name="Dalin E."/>
            <person name="Tice H."/>
            <person name="Bruce D."/>
            <person name="Goodwin L."/>
            <person name="Pitluck S."/>
            <person name="Sims D."/>
            <person name="Brettin T."/>
            <person name="Detter J.C."/>
            <person name="Han C."/>
            <person name="Kuske C.R."/>
            <person name="Schmutz J."/>
            <person name="Larimer F."/>
            <person name="Land M."/>
            <person name="Hauser L."/>
            <person name="Kyrpides N."/>
            <person name="Kim E."/>
            <person name="Zhao J.-S."/>
            <person name="Richardson P."/>
        </authorList>
    </citation>
    <scope>NUCLEOTIDE SEQUENCE [LARGE SCALE GENOMIC DNA]</scope>
    <source>
        <strain>HAW-EB4</strain>
    </source>
</reference>